<accession>Q3IMY6</accession>
<gene>
    <name evidence="1" type="primary">rpl23</name>
    <name type="ordered locus">NP_4858A</name>
</gene>
<proteinExistence type="inferred from homology"/>
<reference key="1">
    <citation type="journal article" date="2005" name="Genome Res.">
        <title>Living with two extremes: conclusions from the genome sequence of Natronomonas pharaonis.</title>
        <authorList>
            <person name="Falb M."/>
            <person name="Pfeiffer F."/>
            <person name="Palm P."/>
            <person name="Rodewald K."/>
            <person name="Hickmann V."/>
            <person name="Tittor J."/>
            <person name="Oesterhelt D."/>
        </authorList>
    </citation>
    <scope>NUCLEOTIDE SEQUENCE [LARGE SCALE GENOMIC DNA]</scope>
    <source>
        <strain>ATCC 35678 / DSM 2160 / CIP 103997 / JCM 8858 / NBRC 14720 / NCIMB 2260 / Gabara</strain>
    </source>
</reference>
<name>RL23_NATPD</name>
<feature type="chain" id="PRO_0000272950" description="Large ribosomal subunit protein uL23">
    <location>
        <begin position="1"/>
        <end position="82"/>
    </location>
</feature>
<sequence>MTIKHPLVTEKAMNDMDFENKLQFVCHPEATKGDIAAAVESQFDVEVDSINTQVRMDGDKKAIVELSADDDAQEVASRIGVF</sequence>
<organism>
    <name type="scientific">Natronomonas pharaonis (strain ATCC 35678 / DSM 2160 / CIP 103997 / JCM 8858 / NBRC 14720 / NCIMB 2260 / Gabara)</name>
    <name type="common">Halobacterium pharaonis</name>
    <dbReference type="NCBI Taxonomy" id="348780"/>
    <lineage>
        <taxon>Archaea</taxon>
        <taxon>Methanobacteriati</taxon>
        <taxon>Methanobacteriota</taxon>
        <taxon>Stenosarchaea group</taxon>
        <taxon>Halobacteria</taxon>
        <taxon>Halobacteriales</taxon>
        <taxon>Haloarculaceae</taxon>
        <taxon>Natronomonas</taxon>
    </lineage>
</organism>
<comment type="function">
    <text evidence="1">Binds to 23S rRNA. One of the proteins that surrounds the polypeptide exit tunnel on the outside of the ribosome.</text>
</comment>
<comment type="subunit">
    <text evidence="1">Part of the 50S ribosomal subunit. Contacts protein L29.</text>
</comment>
<comment type="similarity">
    <text evidence="1">Belongs to the universal ribosomal protein uL23 family.</text>
</comment>
<protein>
    <recommendedName>
        <fullName evidence="1">Large ribosomal subunit protein uL23</fullName>
    </recommendedName>
    <alternativeName>
        <fullName evidence="2">50S ribosomal protein L23</fullName>
    </alternativeName>
</protein>
<dbReference type="EMBL" id="CR936257">
    <property type="protein sequence ID" value="CAI50520.1"/>
    <property type="molecule type" value="Genomic_DNA"/>
</dbReference>
<dbReference type="RefSeq" id="WP_011324132.1">
    <property type="nucleotide sequence ID" value="NC_007426.1"/>
</dbReference>
<dbReference type="SMR" id="Q3IMY6"/>
<dbReference type="STRING" id="348780.NP_4858A"/>
<dbReference type="EnsemblBacteria" id="CAI50520">
    <property type="protein sequence ID" value="CAI50520"/>
    <property type="gene ID" value="NP_4858A"/>
</dbReference>
<dbReference type="GeneID" id="3703133"/>
<dbReference type="KEGG" id="nph:NP_4858A"/>
<dbReference type="eggNOG" id="arCOG04072">
    <property type="taxonomic scope" value="Archaea"/>
</dbReference>
<dbReference type="HOGENOM" id="CLU_037562_4_2_2"/>
<dbReference type="OrthoDB" id="7751at2157"/>
<dbReference type="Proteomes" id="UP000002698">
    <property type="component" value="Chromosome"/>
</dbReference>
<dbReference type="GO" id="GO:1990904">
    <property type="term" value="C:ribonucleoprotein complex"/>
    <property type="evidence" value="ECO:0007669"/>
    <property type="project" value="UniProtKB-KW"/>
</dbReference>
<dbReference type="GO" id="GO:0005840">
    <property type="term" value="C:ribosome"/>
    <property type="evidence" value="ECO:0007669"/>
    <property type="project" value="UniProtKB-KW"/>
</dbReference>
<dbReference type="GO" id="GO:0019843">
    <property type="term" value="F:rRNA binding"/>
    <property type="evidence" value="ECO:0007669"/>
    <property type="project" value="UniProtKB-UniRule"/>
</dbReference>
<dbReference type="GO" id="GO:0003735">
    <property type="term" value="F:structural constituent of ribosome"/>
    <property type="evidence" value="ECO:0007669"/>
    <property type="project" value="InterPro"/>
</dbReference>
<dbReference type="GO" id="GO:0006412">
    <property type="term" value="P:translation"/>
    <property type="evidence" value="ECO:0007669"/>
    <property type="project" value="UniProtKB-UniRule"/>
</dbReference>
<dbReference type="FunFam" id="3.30.70.330:FF:000532">
    <property type="entry name" value="50S ribosomal protein L23"/>
    <property type="match status" value="1"/>
</dbReference>
<dbReference type="Gene3D" id="3.30.70.330">
    <property type="match status" value="1"/>
</dbReference>
<dbReference type="HAMAP" id="MF_01369_A">
    <property type="entry name" value="Ribosomal_uL23_A"/>
    <property type="match status" value="1"/>
</dbReference>
<dbReference type="InterPro" id="IPR012677">
    <property type="entry name" value="Nucleotide-bd_a/b_plait_sf"/>
</dbReference>
<dbReference type="InterPro" id="IPR019985">
    <property type="entry name" value="Ribosomal_uL23"/>
</dbReference>
<dbReference type="InterPro" id="IPR013025">
    <property type="entry name" value="Ribosomal_uL23-like"/>
</dbReference>
<dbReference type="InterPro" id="IPR012678">
    <property type="entry name" value="Ribosomal_uL23/eL15/eS24_sf"/>
</dbReference>
<dbReference type="NCBIfam" id="NF011118">
    <property type="entry name" value="PRK14548.1"/>
    <property type="match status" value="1"/>
</dbReference>
<dbReference type="NCBIfam" id="TIGR03636">
    <property type="entry name" value="uL23_arch"/>
    <property type="match status" value="1"/>
</dbReference>
<dbReference type="PANTHER" id="PTHR11620">
    <property type="entry name" value="60S RIBOSOMAL PROTEIN L23A"/>
    <property type="match status" value="1"/>
</dbReference>
<dbReference type="Pfam" id="PF00276">
    <property type="entry name" value="Ribosomal_L23"/>
    <property type="match status" value="1"/>
</dbReference>
<dbReference type="SUPFAM" id="SSF54189">
    <property type="entry name" value="Ribosomal proteins S24e, L23 and L15e"/>
    <property type="match status" value="1"/>
</dbReference>
<keyword id="KW-1185">Reference proteome</keyword>
<keyword id="KW-0687">Ribonucleoprotein</keyword>
<keyword id="KW-0689">Ribosomal protein</keyword>
<keyword id="KW-0694">RNA-binding</keyword>
<keyword id="KW-0699">rRNA-binding</keyword>
<evidence type="ECO:0000255" key="1">
    <source>
        <dbReference type="HAMAP-Rule" id="MF_01369"/>
    </source>
</evidence>
<evidence type="ECO:0000305" key="2"/>